<name>RL10_LEGPL</name>
<feature type="chain" id="PRO_0000154650" description="Large ribosomal subunit protein uL10">
    <location>
        <begin position="1"/>
        <end position="177"/>
    </location>
</feature>
<comment type="function">
    <text evidence="1">Forms part of the ribosomal stalk, playing a central role in the interaction of the ribosome with GTP-bound translation factors.</text>
</comment>
<comment type="subunit">
    <text evidence="1">Part of the ribosomal stalk of the 50S ribosomal subunit. The N-terminus interacts with L11 and the large rRNA to form the base of the stalk. The C-terminus forms an elongated spine to which L12 dimers bind in a sequential fashion forming a multimeric L10(L12)X complex.</text>
</comment>
<comment type="similarity">
    <text evidence="1">Belongs to the universal ribosomal protein uL10 family.</text>
</comment>
<dbReference type="EMBL" id="CR628337">
    <property type="protein sequence ID" value="CAH14591.1"/>
    <property type="molecule type" value="Genomic_DNA"/>
</dbReference>
<dbReference type="RefSeq" id="WP_010946071.1">
    <property type="nucleotide sequence ID" value="NC_006369.1"/>
</dbReference>
<dbReference type="SMR" id="Q5WZM1"/>
<dbReference type="GeneID" id="57034323"/>
<dbReference type="KEGG" id="lpf:lpl0360"/>
<dbReference type="LegioList" id="lpl0360"/>
<dbReference type="HOGENOM" id="CLU_092227_0_1_6"/>
<dbReference type="Proteomes" id="UP000002517">
    <property type="component" value="Chromosome"/>
</dbReference>
<dbReference type="GO" id="GO:0015934">
    <property type="term" value="C:large ribosomal subunit"/>
    <property type="evidence" value="ECO:0007669"/>
    <property type="project" value="InterPro"/>
</dbReference>
<dbReference type="GO" id="GO:0070180">
    <property type="term" value="F:large ribosomal subunit rRNA binding"/>
    <property type="evidence" value="ECO:0007669"/>
    <property type="project" value="UniProtKB-UniRule"/>
</dbReference>
<dbReference type="GO" id="GO:0003735">
    <property type="term" value="F:structural constituent of ribosome"/>
    <property type="evidence" value="ECO:0007669"/>
    <property type="project" value="InterPro"/>
</dbReference>
<dbReference type="GO" id="GO:0006412">
    <property type="term" value="P:translation"/>
    <property type="evidence" value="ECO:0007669"/>
    <property type="project" value="UniProtKB-UniRule"/>
</dbReference>
<dbReference type="CDD" id="cd05797">
    <property type="entry name" value="Ribosomal_L10"/>
    <property type="match status" value="1"/>
</dbReference>
<dbReference type="Gene3D" id="3.30.70.1730">
    <property type="match status" value="1"/>
</dbReference>
<dbReference type="Gene3D" id="6.10.250.290">
    <property type="match status" value="1"/>
</dbReference>
<dbReference type="HAMAP" id="MF_00362">
    <property type="entry name" value="Ribosomal_uL10"/>
    <property type="match status" value="1"/>
</dbReference>
<dbReference type="InterPro" id="IPR001790">
    <property type="entry name" value="Ribosomal_uL10"/>
</dbReference>
<dbReference type="InterPro" id="IPR043141">
    <property type="entry name" value="Ribosomal_uL10-like_sf"/>
</dbReference>
<dbReference type="InterPro" id="IPR022973">
    <property type="entry name" value="Ribosomal_uL10_bac"/>
</dbReference>
<dbReference type="InterPro" id="IPR047865">
    <property type="entry name" value="Ribosomal_uL10_bac_type"/>
</dbReference>
<dbReference type="InterPro" id="IPR002363">
    <property type="entry name" value="Ribosomal_uL10_CS_bac"/>
</dbReference>
<dbReference type="NCBIfam" id="NF000955">
    <property type="entry name" value="PRK00099.1-1"/>
    <property type="match status" value="1"/>
</dbReference>
<dbReference type="PANTHER" id="PTHR11560">
    <property type="entry name" value="39S RIBOSOMAL PROTEIN L10, MITOCHONDRIAL"/>
    <property type="match status" value="1"/>
</dbReference>
<dbReference type="Pfam" id="PF00466">
    <property type="entry name" value="Ribosomal_L10"/>
    <property type="match status" value="1"/>
</dbReference>
<dbReference type="SUPFAM" id="SSF160369">
    <property type="entry name" value="Ribosomal protein L10-like"/>
    <property type="match status" value="1"/>
</dbReference>
<dbReference type="PROSITE" id="PS01109">
    <property type="entry name" value="RIBOSOMAL_L10"/>
    <property type="match status" value="1"/>
</dbReference>
<keyword id="KW-0687">Ribonucleoprotein</keyword>
<keyword id="KW-0689">Ribosomal protein</keyword>
<keyword id="KW-0694">RNA-binding</keyword>
<keyword id="KW-0699">rRNA-binding</keyword>
<proteinExistence type="inferred from homology"/>
<reference key="1">
    <citation type="journal article" date="2004" name="Nat. Genet.">
        <title>Evidence in the Legionella pneumophila genome for exploitation of host cell functions and high genome plasticity.</title>
        <authorList>
            <person name="Cazalet C."/>
            <person name="Rusniok C."/>
            <person name="Brueggemann H."/>
            <person name="Zidane N."/>
            <person name="Magnier A."/>
            <person name="Ma L."/>
            <person name="Tichit M."/>
            <person name="Jarraud S."/>
            <person name="Bouchier C."/>
            <person name="Vandenesch F."/>
            <person name="Kunst F."/>
            <person name="Etienne J."/>
            <person name="Glaser P."/>
            <person name="Buchrieser C."/>
        </authorList>
    </citation>
    <scope>NUCLEOTIDE SEQUENCE [LARGE SCALE GENOMIC DNA]</scope>
    <source>
        <strain>Lens</strain>
    </source>
</reference>
<organism>
    <name type="scientific">Legionella pneumophila (strain Lens)</name>
    <dbReference type="NCBI Taxonomy" id="297245"/>
    <lineage>
        <taxon>Bacteria</taxon>
        <taxon>Pseudomonadati</taxon>
        <taxon>Pseudomonadota</taxon>
        <taxon>Gammaproteobacteria</taxon>
        <taxon>Legionellales</taxon>
        <taxon>Legionellaceae</taxon>
        <taxon>Legionella</taxon>
    </lineage>
</organism>
<sequence length="177" mass="19321">MTLNLAAKKAVVEEVTAVASKAISAVVADYRGLTVNQMTQLRSEARKSGVYLRVVRNTLTRRAFKNTEFECLNDLLVGPVFIALSLEAPSDAARLLKDYAKTFEKLEIRALSVGGKVYNANQIDAVASLPTRDEAISKLMYVMKAPIEKFVRTLAEPHAKLARTLAAVKDKKAGNPA</sequence>
<evidence type="ECO:0000255" key="1">
    <source>
        <dbReference type="HAMAP-Rule" id="MF_00362"/>
    </source>
</evidence>
<evidence type="ECO:0000305" key="2"/>
<accession>Q5WZM1</accession>
<gene>
    <name evidence="1" type="primary">rplJ</name>
    <name type="ordered locus">lpl0360</name>
</gene>
<protein>
    <recommendedName>
        <fullName evidence="1">Large ribosomal subunit protein uL10</fullName>
    </recommendedName>
    <alternativeName>
        <fullName evidence="2">50S ribosomal protein L10</fullName>
    </alternativeName>
</protein>